<proteinExistence type="evidence at protein level"/>
<sequence length="8" mass="873">VAAGRPRF</sequence>
<feature type="peptide" id="PRO_0000365781" description="Long neuropeptide F" evidence="2">
    <location>
        <begin position="1"/>
        <end position="8"/>
    </location>
</feature>
<feature type="modified residue" description="Phenylalanine amide" evidence="2">
    <location>
        <position position="8"/>
    </location>
</feature>
<organism>
    <name type="scientific">Rhodnius prolixus</name>
    <name type="common">Triatomid bug</name>
    <dbReference type="NCBI Taxonomy" id="13249"/>
    <lineage>
        <taxon>Eukaryota</taxon>
        <taxon>Metazoa</taxon>
        <taxon>Ecdysozoa</taxon>
        <taxon>Arthropoda</taxon>
        <taxon>Hexapoda</taxon>
        <taxon>Insecta</taxon>
        <taxon>Pterygota</taxon>
        <taxon>Neoptera</taxon>
        <taxon>Paraneoptera</taxon>
        <taxon>Hemiptera</taxon>
        <taxon>Heteroptera</taxon>
        <taxon>Panheteroptera</taxon>
        <taxon>Cimicomorpha</taxon>
        <taxon>Reduviidae</taxon>
        <taxon>Triatominae</taxon>
        <taxon>Rhodnius</taxon>
    </lineage>
</organism>
<name>LNF_RHOPR</name>
<comment type="function">
    <text evidence="1">Neuropeptide.</text>
</comment>
<comment type="subcellular location">
    <subcellularLocation>
        <location evidence="1">Secreted</location>
    </subcellularLocation>
</comment>
<comment type="mass spectrometry" mass="872.53" method="MALDI" evidence="2"/>
<protein>
    <recommendedName>
        <fullName evidence="3">Long neuropeptide F</fullName>
        <shortName evidence="3">Rhopr-LNF</shortName>
    </recommendedName>
</protein>
<keyword id="KW-0027">Amidation</keyword>
<keyword id="KW-0903">Direct protein sequencing</keyword>
<keyword id="KW-0527">Neuropeptide</keyword>
<keyword id="KW-1185">Reference proteome</keyword>
<keyword id="KW-0964">Secreted</keyword>
<reference evidence="4" key="1">
    <citation type="journal article" date="2009" name="Proteomics">
        <title>The neuropeptidome of Rhodnius prolixus brain.</title>
        <authorList>
            <person name="Ons S."/>
            <person name="Richter F."/>
            <person name="Urlaub H."/>
            <person name="Pomar R.R."/>
        </authorList>
    </citation>
    <scope>PROTEIN SEQUENCE</scope>
    <scope>MASS SPECTROMETRY</scope>
    <scope>AMIDATION AT PHE-8</scope>
    <source>
        <tissue evidence="2">Brain</tissue>
    </source>
</reference>
<evidence type="ECO:0000250" key="1"/>
<evidence type="ECO:0000269" key="2">
    <source>
    </source>
</evidence>
<evidence type="ECO:0000303" key="3">
    <source>
    </source>
</evidence>
<evidence type="ECO:0000305" key="4"/>
<dbReference type="InParanoid" id="P85813"/>
<dbReference type="Proteomes" id="UP000015103">
    <property type="component" value="Unassembled WGS sequence"/>
</dbReference>
<dbReference type="GO" id="GO:0005576">
    <property type="term" value="C:extracellular region"/>
    <property type="evidence" value="ECO:0007669"/>
    <property type="project" value="UniProtKB-SubCell"/>
</dbReference>
<dbReference type="GO" id="GO:0007218">
    <property type="term" value="P:neuropeptide signaling pathway"/>
    <property type="evidence" value="ECO:0007669"/>
    <property type="project" value="UniProtKB-KW"/>
</dbReference>
<accession>P85813</accession>